<comment type="similarity">
    <text evidence="1">Belongs to the UPF0260 family.</text>
</comment>
<feature type="chain" id="PRO_1000131631" description="UPF0260 protein YcgN">
    <location>
        <begin position="1"/>
        <end position="153"/>
    </location>
</feature>
<dbReference type="EMBL" id="CP001144">
    <property type="protein sequence ID" value="ACH76332.1"/>
    <property type="molecule type" value="Genomic_DNA"/>
</dbReference>
<dbReference type="SMR" id="B5FTM2"/>
<dbReference type="KEGG" id="sed:SeD_A1506"/>
<dbReference type="HOGENOM" id="CLU_109769_0_1_6"/>
<dbReference type="Proteomes" id="UP000008322">
    <property type="component" value="Chromosome"/>
</dbReference>
<dbReference type="HAMAP" id="MF_00676">
    <property type="entry name" value="UPF0260"/>
    <property type="match status" value="1"/>
</dbReference>
<dbReference type="InterPro" id="IPR005358">
    <property type="entry name" value="Puta_zinc/iron-chelating_dom"/>
</dbReference>
<dbReference type="InterPro" id="IPR008228">
    <property type="entry name" value="UCP006173"/>
</dbReference>
<dbReference type="NCBIfam" id="NF003498">
    <property type="entry name" value="PRK05170.1-1"/>
    <property type="match status" value="1"/>
</dbReference>
<dbReference type="NCBIfam" id="NF003501">
    <property type="entry name" value="PRK05170.1-5"/>
    <property type="match status" value="1"/>
</dbReference>
<dbReference type="NCBIfam" id="NF003503">
    <property type="entry name" value="PRK05170.2-1"/>
    <property type="match status" value="1"/>
</dbReference>
<dbReference type="NCBIfam" id="NF003507">
    <property type="entry name" value="PRK05170.2-5"/>
    <property type="match status" value="1"/>
</dbReference>
<dbReference type="PANTHER" id="PTHR37421">
    <property type="entry name" value="UPF0260 PROTEIN YCGN"/>
    <property type="match status" value="1"/>
</dbReference>
<dbReference type="PANTHER" id="PTHR37421:SF1">
    <property type="entry name" value="UPF0260 PROTEIN YCGN"/>
    <property type="match status" value="1"/>
</dbReference>
<dbReference type="Pfam" id="PF03692">
    <property type="entry name" value="CxxCxxCC"/>
    <property type="match status" value="1"/>
</dbReference>
<dbReference type="PIRSF" id="PIRSF006173">
    <property type="entry name" value="UCP006173"/>
    <property type="match status" value="1"/>
</dbReference>
<organism>
    <name type="scientific">Salmonella dublin (strain CT_02021853)</name>
    <dbReference type="NCBI Taxonomy" id="439851"/>
    <lineage>
        <taxon>Bacteria</taxon>
        <taxon>Pseudomonadati</taxon>
        <taxon>Pseudomonadota</taxon>
        <taxon>Gammaproteobacteria</taxon>
        <taxon>Enterobacterales</taxon>
        <taxon>Enterobacteriaceae</taxon>
        <taxon>Salmonella</taxon>
    </lineage>
</organism>
<sequence>MADTLMSDTPFWQRKTLDEMTDAEWESLCDGCGQCCLHKLMDEDTDEIYFTNVACRQLNIKTCQCRHYERRFEFEPDCIKLTRENLPDFEWLPMTCAYRLLAEGKPLPTWHPLLTGSKAAMHGERISVRHIAVKESEVRDWQDHILNKPSWAE</sequence>
<protein>
    <recommendedName>
        <fullName evidence="1">UPF0260 protein YcgN</fullName>
    </recommendedName>
</protein>
<accession>B5FTM2</accession>
<name>YCGN_SALDC</name>
<proteinExistence type="inferred from homology"/>
<reference key="1">
    <citation type="journal article" date="2011" name="J. Bacteriol.">
        <title>Comparative genomics of 28 Salmonella enterica isolates: evidence for CRISPR-mediated adaptive sublineage evolution.</title>
        <authorList>
            <person name="Fricke W.F."/>
            <person name="Mammel M.K."/>
            <person name="McDermott P.F."/>
            <person name="Tartera C."/>
            <person name="White D.G."/>
            <person name="Leclerc J.E."/>
            <person name="Ravel J."/>
            <person name="Cebula T.A."/>
        </authorList>
    </citation>
    <scope>NUCLEOTIDE SEQUENCE [LARGE SCALE GENOMIC DNA]</scope>
    <source>
        <strain>CT_02021853</strain>
    </source>
</reference>
<evidence type="ECO:0000255" key="1">
    <source>
        <dbReference type="HAMAP-Rule" id="MF_00676"/>
    </source>
</evidence>
<gene>
    <name evidence="1" type="primary">ycgN</name>
    <name type="ordered locus">SeD_A1506</name>
</gene>